<dbReference type="EC" id="1.7.1.13" evidence="1"/>
<dbReference type="EMBL" id="CP001096">
    <property type="protein sequence ID" value="ACF01720.1"/>
    <property type="molecule type" value="Genomic_DNA"/>
</dbReference>
<dbReference type="RefSeq" id="WP_012496319.1">
    <property type="nucleotide sequence ID" value="NC_011004.1"/>
</dbReference>
<dbReference type="SMR" id="B3Q6L1"/>
<dbReference type="KEGG" id="rpt:Rpal_3217"/>
<dbReference type="HOGENOM" id="CLU_102489_0_1_5"/>
<dbReference type="OrthoDB" id="9789995at2"/>
<dbReference type="UniPathway" id="UPA00392"/>
<dbReference type="Proteomes" id="UP000001725">
    <property type="component" value="Chromosome"/>
</dbReference>
<dbReference type="GO" id="GO:0005737">
    <property type="term" value="C:cytoplasm"/>
    <property type="evidence" value="ECO:0007669"/>
    <property type="project" value="UniProtKB-SubCell"/>
</dbReference>
<dbReference type="GO" id="GO:0033739">
    <property type="term" value="F:preQ1 synthase activity"/>
    <property type="evidence" value="ECO:0007669"/>
    <property type="project" value="UniProtKB-UniRule"/>
</dbReference>
<dbReference type="GO" id="GO:0008616">
    <property type="term" value="P:queuosine biosynthetic process"/>
    <property type="evidence" value="ECO:0007669"/>
    <property type="project" value="UniProtKB-UniRule"/>
</dbReference>
<dbReference type="GO" id="GO:0006400">
    <property type="term" value="P:tRNA modification"/>
    <property type="evidence" value="ECO:0007669"/>
    <property type="project" value="UniProtKB-UniRule"/>
</dbReference>
<dbReference type="Gene3D" id="3.30.1130.10">
    <property type="match status" value="1"/>
</dbReference>
<dbReference type="HAMAP" id="MF_00818">
    <property type="entry name" value="QueF_type1"/>
    <property type="match status" value="1"/>
</dbReference>
<dbReference type="InterPro" id="IPR043133">
    <property type="entry name" value="GTP-CH-I_C/QueF"/>
</dbReference>
<dbReference type="InterPro" id="IPR050084">
    <property type="entry name" value="NADPH_dep_7-cyano-7-deazaG_red"/>
</dbReference>
<dbReference type="InterPro" id="IPR029500">
    <property type="entry name" value="QueF"/>
</dbReference>
<dbReference type="InterPro" id="IPR016856">
    <property type="entry name" value="QueF_type1"/>
</dbReference>
<dbReference type="NCBIfam" id="TIGR03139">
    <property type="entry name" value="QueF-II"/>
    <property type="match status" value="1"/>
</dbReference>
<dbReference type="PANTHER" id="PTHR34354">
    <property type="entry name" value="NADPH-DEPENDENT 7-CYANO-7-DEAZAGUANINE REDUCTASE"/>
    <property type="match status" value="1"/>
</dbReference>
<dbReference type="PANTHER" id="PTHR34354:SF1">
    <property type="entry name" value="NADPH-DEPENDENT 7-CYANO-7-DEAZAGUANINE REDUCTASE"/>
    <property type="match status" value="1"/>
</dbReference>
<dbReference type="Pfam" id="PF14489">
    <property type="entry name" value="QueF"/>
    <property type="match status" value="1"/>
</dbReference>
<dbReference type="SUPFAM" id="SSF55620">
    <property type="entry name" value="Tetrahydrobiopterin biosynthesis enzymes-like"/>
    <property type="match status" value="1"/>
</dbReference>
<reference key="1">
    <citation type="submission" date="2008-05" db="EMBL/GenBank/DDBJ databases">
        <title>Complete sequence of Rhodopseudomonas palustris TIE-1.</title>
        <authorList>
            <consortium name="US DOE Joint Genome Institute"/>
            <person name="Lucas S."/>
            <person name="Copeland A."/>
            <person name="Lapidus A."/>
            <person name="Glavina del Rio T."/>
            <person name="Dalin E."/>
            <person name="Tice H."/>
            <person name="Pitluck S."/>
            <person name="Chain P."/>
            <person name="Malfatti S."/>
            <person name="Shin M."/>
            <person name="Vergez L."/>
            <person name="Lang D."/>
            <person name="Schmutz J."/>
            <person name="Larimer F."/>
            <person name="Land M."/>
            <person name="Hauser L."/>
            <person name="Kyrpides N."/>
            <person name="Mikhailova N."/>
            <person name="Emerson D."/>
            <person name="Newman D.K."/>
            <person name="Roden E."/>
            <person name="Richardson P."/>
        </authorList>
    </citation>
    <scope>NUCLEOTIDE SEQUENCE [LARGE SCALE GENOMIC DNA]</scope>
    <source>
        <strain>TIE-1</strain>
    </source>
</reference>
<feature type="chain" id="PRO_1000134311" description="NADPH-dependent 7-cyano-7-deazaguanine reductase">
    <location>
        <begin position="1"/>
        <end position="158"/>
    </location>
</feature>
<feature type="active site" description="Thioimide intermediate" evidence="1">
    <location>
        <position position="56"/>
    </location>
</feature>
<feature type="active site" description="Proton donor" evidence="1">
    <location>
        <position position="63"/>
    </location>
</feature>
<feature type="binding site" evidence="1">
    <location>
        <begin position="78"/>
        <end position="80"/>
    </location>
    <ligand>
        <name>substrate</name>
    </ligand>
</feature>
<feature type="binding site" evidence="1">
    <location>
        <begin position="97"/>
        <end position="98"/>
    </location>
    <ligand>
        <name>substrate</name>
    </ligand>
</feature>
<protein>
    <recommendedName>
        <fullName evidence="1">NADPH-dependent 7-cyano-7-deazaguanine reductase</fullName>
        <ecNumber evidence="1">1.7.1.13</ecNumber>
    </recommendedName>
    <alternativeName>
        <fullName evidence="1">7-cyano-7-carbaguanine reductase</fullName>
    </alternativeName>
    <alternativeName>
        <fullName evidence="1">NADPH-dependent nitrile oxidoreductase</fullName>
    </alternativeName>
    <alternativeName>
        <fullName evidence="1">PreQ(0) reductase</fullName>
    </alternativeName>
</protein>
<organism>
    <name type="scientific">Rhodopseudomonas palustris (strain TIE-1)</name>
    <dbReference type="NCBI Taxonomy" id="395960"/>
    <lineage>
        <taxon>Bacteria</taxon>
        <taxon>Pseudomonadati</taxon>
        <taxon>Pseudomonadota</taxon>
        <taxon>Alphaproteobacteria</taxon>
        <taxon>Hyphomicrobiales</taxon>
        <taxon>Nitrobacteraceae</taxon>
        <taxon>Rhodopseudomonas</taxon>
    </lineage>
</organism>
<accession>B3Q6L1</accession>
<comment type="function">
    <text evidence="1">Catalyzes the NADPH-dependent reduction of 7-cyano-7-deazaguanine (preQ0) to 7-aminomethyl-7-deazaguanine (preQ1).</text>
</comment>
<comment type="catalytic activity">
    <reaction evidence="1">
        <text>7-aminomethyl-7-carbaguanine + 2 NADP(+) = 7-cyano-7-deazaguanine + 2 NADPH + 3 H(+)</text>
        <dbReference type="Rhea" id="RHEA:13409"/>
        <dbReference type="ChEBI" id="CHEBI:15378"/>
        <dbReference type="ChEBI" id="CHEBI:45075"/>
        <dbReference type="ChEBI" id="CHEBI:57783"/>
        <dbReference type="ChEBI" id="CHEBI:58349"/>
        <dbReference type="ChEBI" id="CHEBI:58703"/>
        <dbReference type="EC" id="1.7.1.13"/>
    </reaction>
</comment>
<comment type="pathway">
    <text evidence="1">tRNA modification; tRNA-queuosine biosynthesis.</text>
</comment>
<comment type="subcellular location">
    <subcellularLocation>
        <location evidence="1">Cytoplasm</location>
    </subcellularLocation>
</comment>
<comment type="similarity">
    <text evidence="1">Belongs to the GTP cyclohydrolase I family. QueF type 1 subfamily.</text>
</comment>
<name>QUEF_RHOPT</name>
<keyword id="KW-0963">Cytoplasm</keyword>
<keyword id="KW-0521">NADP</keyword>
<keyword id="KW-0560">Oxidoreductase</keyword>
<keyword id="KW-0671">Queuosine biosynthesis</keyword>
<evidence type="ECO:0000255" key="1">
    <source>
        <dbReference type="HAMAP-Rule" id="MF_00818"/>
    </source>
</evidence>
<sequence>MSKTPRKSAASPSLQLGQAVEWPDRPEAAKLDRVPNPQKDTHFLARFTAPEFTSLCPVTGQPDFAHLVIDYVPGPWLLESKSLKLYLASFRNHGAFHEDCTVAIGKRIATEIKPKWLRIGGYWYPRGGIPIDVFWQTGKLPKDVWVPDQGVQPYRGRG</sequence>
<gene>
    <name evidence="1" type="primary">queF</name>
    <name type="ordered locus">Rpal_3217</name>
</gene>
<proteinExistence type="inferred from homology"/>